<comment type="similarity">
    <text evidence="1">Belongs to the bacterial ribosomal protein bL33 family.</text>
</comment>
<accession>Q0BU03</accession>
<sequence length="55" mass="6319">MAKSNTVQIKLVSTADTGFFYVTKKNARAQTGKLEFRKYDPVVRKHVTFKEAKIK</sequence>
<evidence type="ECO:0000255" key="1">
    <source>
        <dbReference type="HAMAP-Rule" id="MF_00294"/>
    </source>
</evidence>
<evidence type="ECO:0000305" key="2"/>
<proteinExistence type="inferred from homology"/>
<reference key="1">
    <citation type="journal article" date="2007" name="J. Bacteriol.">
        <title>Genome sequence analysis of the emerging human pathogenic acetic acid bacterium Granulibacter bethesdensis.</title>
        <authorList>
            <person name="Greenberg D.E."/>
            <person name="Porcella S.F."/>
            <person name="Zelazny A.M."/>
            <person name="Virtaneva K."/>
            <person name="Sturdevant D.E."/>
            <person name="Kupko J.J. III"/>
            <person name="Barbian K.D."/>
            <person name="Babar A."/>
            <person name="Dorward D.W."/>
            <person name="Holland S.M."/>
        </authorList>
    </citation>
    <scope>NUCLEOTIDE SEQUENCE [LARGE SCALE GENOMIC DNA]</scope>
    <source>
        <strain>ATCC BAA-1260 / CGDNIH1</strain>
    </source>
</reference>
<protein>
    <recommendedName>
        <fullName evidence="1">Large ribosomal subunit protein bL33</fullName>
    </recommendedName>
    <alternativeName>
        <fullName evidence="2">50S ribosomal protein L33</fullName>
    </alternativeName>
</protein>
<dbReference type="EMBL" id="CP000394">
    <property type="protein sequence ID" value="ABI61699.1"/>
    <property type="molecule type" value="Genomic_DNA"/>
</dbReference>
<dbReference type="RefSeq" id="WP_011631508.1">
    <property type="nucleotide sequence ID" value="NC_008343.2"/>
</dbReference>
<dbReference type="SMR" id="Q0BU03"/>
<dbReference type="STRING" id="391165.GbCGDNIH1_0801"/>
<dbReference type="GeneID" id="69745058"/>
<dbReference type="KEGG" id="gbe:GbCGDNIH1_0801"/>
<dbReference type="eggNOG" id="COG0267">
    <property type="taxonomic scope" value="Bacteria"/>
</dbReference>
<dbReference type="HOGENOM" id="CLU_190949_1_1_5"/>
<dbReference type="OrthoDB" id="21586at2"/>
<dbReference type="Proteomes" id="UP000001963">
    <property type="component" value="Chromosome"/>
</dbReference>
<dbReference type="GO" id="GO:0022625">
    <property type="term" value="C:cytosolic large ribosomal subunit"/>
    <property type="evidence" value="ECO:0007669"/>
    <property type="project" value="TreeGrafter"/>
</dbReference>
<dbReference type="GO" id="GO:0003735">
    <property type="term" value="F:structural constituent of ribosome"/>
    <property type="evidence" value="ECO:0007669"/>
    <property type="project" value="InterPro"/>
</dbReference>
<dbReference type="GO" id="GO:0006412">
    <property type="term" value="P:translation"/>
    <property type="evidence" value="ECO:0007669"/>
    <property type="project" value="UniProtKB-UniRule"/>
</dbReference>
<dbReference type="Gene3D" id="2.20.28.120">
    <property type="entry name" value="Ribosomal protein L33"/>
    <property type="match status" value="1"/>
</dbReference>
<dbReference type="HAMAP" id="MF_00294">
    <property type="entry name" value="Ribosomal_bL33"/>
    <property type="match status" value="1"/>
</dbReference>
<dbReference type="InterPro" id="IPR001705">
    <property type="entry name" value="Ribosomal_bL33"/>
</dbReference>
<dbReference type="InterPro" id="IPR018264">
    <property type="entry name" value="Ribosomal_bL33_CS"/>
</dbReference>
<dbReference type="InterPro" id="IPR038584">
    <property type="entry name" value="Ribosomal_bL33_sf"/>
</dbReference>
<dbReference type="InterPro" id="IPR011332">
    <property type="entry name" value="Ribosomal_zn-bd"/>
</dbReference>
<dbReference type="NCBIfam" id="NF001860">
    <property type="entry name" value="PRK00595.1"/>
    <property type="match status" value="1"/>
</dbReference>
<dbReference type="NCBIfam" id="TIGR01023">
    <property type="entry name" value="rpmG_bact"/>
    <property type="match status" value="1"/>
</dbReference>
<dbReference type="PANTHER" id="PTHR15238">
    <property type="entry name" value="54S RIBOSOMAL PROTEIN L39, MITOCHONDRIAL"/>
    <property type="match status" value="1"/>
</dbReference>
<dbReference type="PANTHER" id="PTHR15238:SF1">
    <property type="entry name" value="LARGE RIBOSOMAL SUBUNIT PROTEIN BL33M"/>
    <property type="match status" value="1"/>
</dbReference>
<dbReference type="Pfam" id="PF00471">
    <property type="entry name" value="Ribosomal_L33"/>
    <property type="match status" value="1"/>
</dbReference>
<dbReference type="SUPFAM" id="SSF57829">
    <property type="entry name" value="Zn-binding ribosomal proteins"/>
    <property type="match status" value="1"/>
</dbReference>
<dbReference type="PROSITE" id="PS00582">
    <property type="entry name" value="RIBOSOMAL_L33"/>
    <property type="match status" value="1"/>
</dbReference>
<gene>
    <name evidence="1" type="primary">rpmG</name>
    <name type="ordered locus">GbCGDNIH1_0801</name>
</gene>
<keyword id="KW-1185">Reference proteome</keyword>
<keyword id="KW-0687">Ribonucleoprotein</keyword>
<keyword id="KW-0689">Ribosomal protein</keyword>
<feature type="chain" id="PRO_0000356477" description="Large ribosomal subunit protein bL33">
    <location>
        <begin position="1"/>
        <end position="55"/>
    </location>
</feature>
<name>RL33_GRABC</name>
<organism>
    <name type="scientific">Granulibacter bethesdensis (strain ATCC BAA-1260 / CGDNIH1)</name>
    <dbReference type="NCBI Taxonomy" id="391165"/>
    <lineage>
        <taxon>Bacteria</taxon>
        <taxon>Pseudomonadati</taxon>
        <taxon>Pseudomonadota</taxon>
        <taxon>Alphaproteobacteria</taxon>
        <taxon>Acetobacterales</taxon>
        <taxon>Acetobacteraceae</taxon>
        <taxon>Granulibacter</taxon>
    </lineage>
</organism>